<gene>
    <name evidence="1" type="primary">dnaJ</name>
    <name type="ordered locus">Cag_1422</name>
</gene>
<feature type="chain" id="PRO_1000085172" description="Chaperone protein DnaJ">
    <location>
        <begin position="1"/>
        <end position="400"/>
    </location>
</feature>
<feature type="domain" description="J" evidence="1">
    <location>
        <begin position="4"/>
        <end position="69"/>
    </location>
</feature>
<feature type="repeat" description="CXXCXGXG motif">
    <location>
        <begin position="169"/>
        <end position="176"/>
    </location>
</feature>
<feature type="repeat" description="CXXCXGXG motif">
    <location>
        <begin position="185"/>
        <end position="192"/>
    </location>
</feature>
<feature type="repeat" description="CXXCXGXG motif">
    <location>
        <begin position="211"/>
        <end position="218"/>
    </location>
</feature>
<feature type="repeat" description="CXXCXGXG motif">
    <location>
        <begin position="225"/>
        <end position="232"/>
    </location>
</feature>
<feature type="zinc finger region" description="CR-type" evidence="1">
    <location>
        <begin position="156"/>
        <end position="237"/>
    </location>
</feature>
<feature type="binding site" evidence="1">
    <location>
        <position position="169"/>
    </location>
    <ligand>
        <name>Zn(2+)</name>
        <dbReference type="ChEBI" id="CHEBI:29105"/>
        <label>1</label>
    </ligand>
</feature>
<feature type="binding site" evidence="1">
    <location>
        <position position="172"/>
    </location>
    <ligand>
        <name>Zn(2+)</name>
        <dbReference type="ChEBI" id="CHEBI:29105"/>
        <label>1</label>
    </ligand>
</feature>
<feature type="binding site" evidence="1">
    <location>
        <position position="185"/>
    </location>
    <ligand>
        <name>Zn(2+)</name>
        <dbReference type="ChEBI" id="CHEBI:29105"/>
        <label>2</label>
    </ligand>
</feature>
<feature type="binding site" evidence="1">
    <location>
        <position position="188"/>
    </location>
    <ligand>
        <name>Zn(2+)</name>
        <dbReference type="ChEBI" id="CHEBI:29105"/>
        <label>2</label>
    </ligand>
</feature>
<feature type="binding site" evidence="1">
    <location>
        <position position="211"/>
    </location>
    <ligand>
        <name>Zn(2+)</name>
        <dbReference type="ChEBI" id="CHEBI:29105"/>
        <label>2</label>
    </ligand>
</feature>
<feature type="binding site" evidence="1">
    <location>
        <position position="214"/>
    </location>
    <ligand>
        <name>Zn(2+)</name>
        <dbReference type="ChEBI" id="CHEBI:29105"/>
        <label>2</label>
    </ligand>
</feature>
<feature type="binding site" evidence="1">
    <location>
        <position position="225"/>
    </location>
    <ligand>
        <name>Zn(2+)</name>
        <dbReference type="ChEBI" id="CHEBI:29105"/>
        <label>1</label>
    </ligand>
</feature>
<feature type="binding site" evidence="1">
    <location>
        <position position="228"/>
    </location>
    <ligand>
        <name>Zn(2+)</name>
        <dbReference type="ChEBI" id="CHEBI:29105"/>
        <label>1</label>
    </ligand>
</feature>
<organism>
    <name type="scientific">Chlorobium chlorochromatii (strain CaD3)</name>
    <dbReference type="NCBI Taxonomy" id="340177"/>
    <lineage>
        <taxon>Bacteria</taxon>
        <taxon>Pseudomonadati</taxon>
        <taxon>Chlorobiota</taxon>
        <taxon>Chlorobiia</taxon>
        <taxon>Chlorobiales</taxon>
        <taxon>Chlorobiaceae</taxon>
        <taxon>Chlorobium/Pelodictyon group</taxon>
        <taxon>Chlorobium</taxon>
    </lineage>
</organism>
<comment type="function">
    <text evidence="1">Participates actively in the response to hyperosmotic and heat shock by preventing the aggregation of stress-denatured proteins and by disaggregating proteins, also in an autonomous, DnaK-independent fashion. Unfolded proteins bind initially to DnaJ; upon interaction with the DnaJ-bound protein, DnaK hydrolyzes its bound ATP, resulting in the formation of a stable complex. GrpE releases ADP from DnaK; ATP binding to DnaK triggers the release of the substrate protein, thus completing the reaction cycle. Several rounds of ATP-dependent interactions between DnaJ, DnaK and GrpE are required for fully efficient folding. Also involved, together with DnaK and GrpE, in the DNA replication of plasmids through activation of initiation proteins.</text>
</comment>
<comment type="cofactor">
    <cofactor evidence="1">
        <name>Zn(2+)</name>
        <dbReference type="ChEBI" id="CHEBI:29105"/>
    </cofactor>
    <text evidence="1">Binds 2 Zn(2+) ions per monomer.</text>
</comment>
<comment type="subunit">
    <text evidence="1">Homodimer.</text>
</comment>
<comment type="subcellular location">
    <subcellularLocation>
        <location evidence="1">Cytoplasm</location>
    </subcellularLocation>
</comment>
<comment type="domain">
    <text evidence="1">The J domain is necessary and sufficient to stimulate DnaK ATPase activity. Zinc center 1 plays an important role in the autonomous, DnaK-independent chaperone activity of DnaJ. Zinc center 2 is essential for interaction with DnaK and for DnaJ activity.</text>
</comment>
<comment type="similarity">
    <text evidence="1">Belongs to the DnaJ family.</text>
</comment>
<keyword id="KW-0143">Chaperone</keyword>
<keyword id="KW-0963">Cytoplasm</keyword>
<keyword id="KW-0235">DNA replication</keyword>
<keyword id="KW-0479">Metal-binding</keyword>
<keyword id="KW-0677">Repeat</keyword>
<keyword id="KW-0346">Stress response</keyword>
<keyword id="KW-0862">Zinc</keyword>
<keyword id="KW-0863">Zinc-finger</keyword>
<dbReference type="EMBL" id="CP000108">
    <property type="protein sequence ID" value="ABB28680.1"/>
    <property type="molecule type" value="Genomic_DNA"/>
</dbReference>
<dbReference type="SMR" id="Q3AQP5"/>
<dbReference type="STRING" id="340177.Cag_1422"/>
<dbReference type="KEGG" id="cch:Cag_1422"/>
<dbReference type="eggNOG" id="COG0484">
    <property type="taxonomic scope" value="Bacteria"/>
</dbReference>
<dbReference type="HOGENOM" id="CLU_017633_0_7_10"/>
<dbReference type="OrthoDB" id="9779889at2"/>
<dbReference type="GO" id="GO:0005737">
    <property type="term" value="C:cytoplasm"/>
    <property type="evidence" value="ECO:0007669"/>
    <property type="project" value="UniProtKB-SubCell"/>
</dbReference>
<dbReference type="GO" id="GO:0005524">
    <property type="term" value="F:ATP binding"/>
    <property type="evidence" value="ECO:0007669"/>
    <property type="project" value="InterPro"/>
</dbReference>
<dbReference type="GO" id="GO:0031072">
    <property type="term" value="F:heat shock protein binding"/>
    <property type="evidence" value="ECO:0007669"/>
    <property type="project" value="InterPro"/>
</dbReference>
<dbReference type="GO" id="GO:0051082">
    <property type="term" value="F:unfolded protein binding"/>
    <property type="evidence" value="ECO:0007669"/>
    <property type="project" value="UniProtKB-UniRule"/>
</dbReference>
<dbReference type="GO" id="GO:0008270">
    <property type="term" value="F:zinc ion binding"/>
    <property type="evidence" value="ECO:0007669"/>
    <property type="project" value="UniProtKB-UniRule"/>
</dbReference>
<dbReference type="GO" id="GO:0051085">
    <property type="term" value="P:chaperone cofactor-dependent protein refolding"/>
    <property type="evidence" value="ECO:0007669"/>
    <property type="project" value="TreeGrafter"/>
</dbReference>
<dbReference type="GO" id="GO:0006260">
    <property type="term" value="P:DNA replication"/>
    <property type="evidence" value="ECO:0007669"/>
    <property type="project" value="UniProtKB-KW"/>
</dbReference>
<dbReference type="GO" id="GO:0042026">
    <property type="term" value="P:protein refolding"/>
    <property type="evidence" value="ECO:0007669"/>
    <property type="project" value="TreeGrafter"/>
</dbReference>
<dbReference type="GO" id="GO:0009408">
    <property type="term" value="P:response to heat"/>
    <property type="evidence" value="ECO:0007669"/>
    <property type="project" value="InterPro"/>
</dbReference>
<dbReference type="CDD" id="cd06257">
    <property type="entry name" value="DnaJ"/>
    <property type="match status" value="1"/>
</dbReference>
<dbReference type="CDD" id="cd10747">
    <property type="entry name" value="DnaJ_C"/>
    <property type="match status" value="1"/>
</dbReference>
<dbReference type="CDD" id="cd10719">
    <property type="entry name" value="DnaJ_zf"/>
    <property type="match status" value="1"/>
</dbReference>
<dbReference type="FunFam" id="1.10.287.110:FF:000034">
    <property type="entry name" value="Chaperone protein DnaJ"/>
    <property type="match status" value="1"/>
</dbReference>
<dbReference type="FunFam" id="2.60.260.20:FF:000005">
    <property type="entry name" value="Chaperone protein dnaJ 1, mitochondrial"/>
    <property type="match status" value="1"/>
</dbReference>
<dbReference type="FunFam" id="2.10.230.10:FF:000002">
    <property type="entry name" value="Molecular chaperone DnaJ"/>
    <property type="match status" value="1"/>
</dbReference>
<dbReference type="Gene3D" id="1.10.287.110">
    <property type="entry name" value="DnaJ domain"/>
    <property type="match status" value="1"/>
</dbReference>
<dbReference type="Gene3D" id="2.10.230.10">
    <property type="entry name" value="Heat shock protein DnaJ, cysteine-rich domain"/>
    <property type="match status" value="1"/>
</dbReference>
<dbReference type="Gene3D" id="2.60.260.20">
    <property type="entry name" value="Urease metallochaperone UreE, N-terminal domain"/>
    <property type="match status" value="2"/>
</dbReference>
<dbReference type="HAMAP" id="MF_01152">
    <property type="entry name" value="DnaJ"/>
    <property type="match status" value="1"/>
</dbReference>
<dbReference type="InterPro" id="IPR012724">
    <property type="entry name" value="DnaJ"/>
</dbReference>
<dbReference type="InterPro" id="IPR002939">
    <property type="entry name" value="DnaJ_C"/>
</dbReference>
<dbReference type="InterPro" id="IPR001623">
    <property type="entry name" value="DnaJ_domain"/>
</dbReference>
<dbReference type="InterPro" id="IPR018253">
    <property type="entry name" value="DnaJ_domain_CS"/>
</dbReference>
<dbReference type="InterPro" id="IPR008971">
    <property type="entry name" value="HSP40/DnaJ_pept-bd"/>
</dbReference>
<dbReference type="InterPro" id="IPR001305">
    <property type="entry name" value="HSP_DnaJ_Cys-rich_dom"/>
</dbReference>
<dbReference type="InterPro" id="IPR036410">
    <property type="entry name" value="HSP_DnaJ_Cys-rich_dom_sf"/>
</dbReference>
<dbReference type="InterPro" id="IPR036869">
    <property type="entry name" value="J_dom_sf"/>
</dbReference>
<dbReference type="NCBIfam" id="TIGR02349">
    <property type="entry name" value="DnaJ_bact"/>
    <property type="match status" value="1"/>
</dbReference>
<dbReference type="NCBIfam" id="NF010874">
    <property type="entry name" value="PRK14281.1"/>
    <property type="match status" value="1"/>
</dbReference>
<dbReference type="PANTHER" id="PTHR43096:SF48">
    <property type="entry name" value="CHAPERONE PROTEIN DNAJ"/>
    <property type="match status" value="1"/>
</dbReference>
<dbReference type="PANTHER" id="PTHR43096">
    <property type="entry name" value="DNAJ HOMOLOG 1, MITOCHONDRIAL-RELATED"/>
    <property type="match status" value="1"/>
</dbReference>
<dbReference type="Pfam" id="PF00226">
    <property type="entry name" value="DnaJ"/>
    <property type="match status" value="1"/>
</dbReference>
<dbReference type="Pfam" id="PF01556">
    <property type="entry name" value="DnaJ_C"/>
    <property type="match status" value="1"/>
</dbReference>
<dbReference type="Pfam" id="PF00684">
    <property type="entry name" value="DnaJ_CXXCXGXG"/>
    <property type="match status" value="1"/>
</dbReference>
<dbReference type="PRINTS" id="PR00625">
    <property type="entry name" value="JDOMAIN"/>
</dbReference>
<dbReference type="SMART" id="SM00271">
    <property type="entry name" value="DnaJ"/>
    <property type="match status" value="1"/>
</dbReference>
<dbReference type="SUPFAM" id="SSF46565">
    <property type="entry name" value="Chaperone J-domain"/>
    <property type="match status" value="1"/>
</dbReference>
<dbReference type="SUPFAM" id="SSF57938">
    <property type="entry name" value="DnaJ/Hsp40 cysteine-rich domain"/>
    <property type="match status" value="1"/>
</dbReference>
<dbReference type="SUPFAM" id="SSF49493">
    <property type="entry name" value="HSP40/DnaJ peptide-binding domain"/>
    <property type="match status" value="2"/>
</dbReference>
<dbReference type="PROSITE" id="PS00636">
    <property type="entry name" value="DNAJ_1"/>
    <property type="match status" value="1"/>
</dbReference>
<dbReference type="PROSITE" id="PS50076">
    <property type="entry name" value="DNAJ_2"/>
    <property type="match status" value="1"/>
</dbReference>
<dbReference type="PROSITE" id="PS51188">
    <property type="entry name" value="ZF_CR"/>
    <property type="match status" value="1"/>
</dbReference>
<sequence length="400" mass="42881">MKKDYYETLGVTRSSNKDDIKKAYRKLAVQYHPDKNPGNKEAEEHFKEVNEAYEVLSNDDKRRRYDQFGHAGVGSSAASGGGGAYAGGADFSDIFSAFNDMFTGGGARRGGSPFGGFEDAFGGGGGGGARRRASSGIHGTDLKIRLKLTLEEIAKGVEKTLKVKRQVPCEVCNGTGSKTGATETCQTCHGSGEVRQVSKTMFGQFVNIAACPTCGGEGRTIKERCTACYGEGIKLGETTVKINVPAGVENGNYMTMRGQGNAGPRGGAAGDLIVVFEEIHHETFTRNGHDVIYNLAVSYPDMVLGTKVEVPTLDGAVKLTIPAGTQPETMLRIQGHGIGHLKGGGRGDQYVKVNVFVPKEVSHQDKELLKDLRKSSNLCPNAHHDSESKSFFEKARDIFS</sequence>
<accession>Q3AQP5</accession>
<name>DNAJ_CHLCH</name>
<reference key="1">
    <citation type="submission" date="2005-08" db="EMBL/GenBank/DDBJ databases">
        <title>Complete sequence of Chlorobium chlorochromatii CaD3.</title>
        <authorList>
            <consortium name="US DOE Joint Genome Institute"/>
            <person name="Copeland A."/>
            <person name="Lucas S."/>
            <person name="Lapidus A."/>
            <person name="Barry K."/>
            <person name="Detter J.C."/>
            <person name="Glavina T."/>
            <person name="Hammon N."/>
            <person name="Israni S."/>
            <person name="Pitluck S."/>
            <person name="Bryant D."/>
            <person name="Schmutz J."/>
            <person name="Larimer F."/>
            <person name="Land M."/>
            <person name="Kyrpides N."/>
            <person name="Ivanova N."/>
            <person name="Richardson P."/>
        </authorList>
    </citation>
    <scope>NUCLEOTIDE SEQUENCE [LARGE SCALE GENOMIC DNA]</scope>
    <source>
        <strain>CaD3</strain>
    </source>
</reference>
<evidence type="ECO:0000255" key="1">
    <source>
        <dbReference type="HAMAP-Rule" id="MF_01152"/>
    </source>
</evidence>
<proteinExistence type="inferred from homology"/>
<protein>
    <recommendedName>
        <fullName evidence="1">Chaperone protein DnaJ</fullName>
    </recommendedName>
</protein>